<evidence type="ECO:0000255" key="1">
    <source>
        <dbReference type="HAMAP-Rule" id="MF_01610"/>
    </source>
</evidence>
<organism>
    <name type="scientific">Methanosarcina acetivorans (strain ATCC 35395 / DSM 2834 / JCM 12185 / C2A)</name>
    <dbReference type="NCBI Taxonomy" id="188937"/>
    <lineage>
        <taxon>Archaea</taxon>
        <taxon>Methanobacteriati</taxon>
        <taxon>Methanobacteriota</taxon>
        <taxon>Stenosarchaea group</taxon>
        <taxon>Methanomicrobia</taxon>
        <taxon>Methanosarcinales</taxon>
        <taxon>Methanosarcinaceae</taxon>
        <taxon>Methanosarcina</taxon>
    </lineage>
</organism>
<proteinExistence type="inferred from homology"/>
<name>MFNA_METAC</name>
<feature type="chain" id="PRO_0000147022" description="Probable L-tyrosine/L-aspartate decarboxylase">
    <location>
        <begin position="1"/>
        <end position="395"/>
    </location>
</feature>
<feature type="modified residue" description="N6-(pyridoxal phosphate)lysine" evidence="1">
    <location>
        <position position="242"/>
    </location>
</feature>
<gene>
    <name evidence="1" type="primary">mfnA</name>
    <name type="ordered locus">MA_0006</name>
</gene>
<protein>
    <recommendedName>
        <fullName evidence="1">Probable L-tyrosine/L-aspartate decarboxylase</fullName>
        <shortName evidence="1">TDC/ADC</shortName>
        <ecNumber evidence="1">4.1.1.11</ecNumber>
        <ecNumber evidence="1">4.1.1.25</ecNumber>
    </recommendedName>
</protein>
<sequence length="395" mass="43305">MNEQGLSEKEIFSYLENAKSEDTDYYRVLSSMCTHPHKIAVEANRLFIEANLGDLGLFAGASRLEQEVVGMLGELLHAPSIDVPFGGSCESSACGYLTTGGTESNIQAVRGMKNLVTTGKKELKGAPNIVIPESAHFSFDKVADMMGIEVRRASLDSEFRVDMASIESLIDANTIGLIGIAGNTEFGQIDPIDKLSEIALENELFLHIDAAFGGFVIPFLEKPQPFDFKLPGVTSIAVDPHKMGLSTIPSGALLFRSASFLDSLKVNTPYLTTKAQFTLTGTRSGASAAATCAVMKYLGNEGYRKNVQYCMQLTEKLVIEARKIGFEPLLEPVMNVVALKVPNPDFVREQMLERFGWNVSITRTPRALRLVLMPHNTLEDIEIFVQDLKEVTVEI</sequence>
<comment type="function">
    <text evidence="1">Catalyzes the decarboxylation of L-tyrosine to produce tyramine for methanofuran biosynthesis. Can also catalyze the decarboxylation of L-aspartate to produce beta-alanine for coenzyme A (CoA) biosynthesis.</text>
</comment>
<comment type="catalytic activity">
    <reaction evidence="1">
        <text>L-tyrosine + H(+) = tyramine + CO2</text>
        <dbReference type="Rhea" id="RHEA:14345"/>
        <dbReference type="ChEBI" id="CHEBI:15378"/>
        <dbReference type="ChEBI" id="CHEBI:16526"/>
        <dbReference type="ChEBI" id="CHEBI:58315"/>
        <dbReference type="ChEBI" id="CHEBI:327995"/>
        <dbReference type="EC" id="4.1.1.25"/>
    </reaction>
</comment>
<comment type="catalytic activity">
    <reaction evidence="1">
        <text>L-aspartate + H(+) = beta-alanine + CO2</text>
        <dbReference type="Rhea" id="RHEA:19497"/>
        <dbReference type="ChEBI" id="CHEBI:15378"/>
        <dbReference type="ChEBI" id="CHEBI:16526"/>
        <dbReference type="ChEBI" id="CHEBI:29991"/>
        <dbReference type="ChEBI" id="CHEBI:57966"/>
        <dbReference type="EC" id="4.1.1.11"/>
    </reaction>
</comment>
<comment type="cofactor">
    <cofactor evidence="1">
        <name>pyridoxal 5'-phosphate</name>
        <dbReference type="ChEBI" id="CHEBI:597326"/>
    </cofactor>
</comment>
<comment type="pathway">
    <text evidence="1">Cofactor biosynthesis; methanofuran biosynthesis.</text>
</comment>
<comment type="pathway">
    <text evidence="1">Cofactor biosynthesis; coenzyme A biosynthesis.</text>
</comment>
<comment type="similarity">
    <text evidence="1">Belongs to the group II decarboxylase family. MfnA subfamily.</text>
</comment>
<dbReference type="EC" id="4.1.1.11" evidence="1"/>
<dbReference type="EC" id="4.1.1.25" evidence="1"/>
<dbReference type="EMBL" id="AE010299">
    <property type="protein sequence ID" value="AAM03460.1"/>
    <property type="molecule type" value="Genomic_DNA"/>
</dbReference>
<dbReference type="RefSeq" id="WP_011020065.1">
    <property type="nucleotide sequence ID" value="NC_003552.1"/>
</dbReference>
<dbReference type="SMR" id="Q8TUQ9"/>
<dbReference type="STRING" id="188937.MA_0006"/>
<dbReference type="EnsemblBacteria" id="AAM03460">
    <property type="protein sequence ID" value="AAM03460"/>
    <property type="gene ID" value="MA_0006"/>
</dbReference>
<dbReference type="GeneID" id="1471898"/>
<dbReference type="KEGG" id="mac:MA_0006"/>
<dbReference type="HOGENOM" id="CLU_028929_2_1_2"/>
<dbReference type="InParanoid" id="Q8TUQ9"/>
<dbReference type="OrthoDB" id="56891at2157"/>
<dbReference type="PhylomeDB" id="Q8TUQ9"/>
<dbReference type="UniPathway" id="UPA00080"/>
<dbReference type="UniPathway" id="UPA00241"/>
<dbReference type="Proteomes" id="UP000002487">
    <property type="component" value="Chromosome"/>
</dbReference>
<dbReference type="GO" id="GO:0004068">
    <property type="term" value="F:aspartate 1-decarboxylase activity"/>
    <property type="evidence" value="ECO:0000318"/>
    <property type="project" value="GO_Central"/>
</dbReference>
<dbReference type="GO" id="GO:0030170">
    <property type="term" value="F:pyridoxal phosphate binding"/>
    <property type="evidence" value="ECO:0007669"/>
    <property type="project" value="UniProtKB-UniRule"/>
</dbReference>
<dbReference type="GO" id="GO:0004837">
    <property type="term" value="F:tyrosine decarboxylase activity"/>
    <property type="evidence" value="ECO:0007669"/>
    <property type="project" value="UniProtKB-UniRule"/>
</dbReference>
<dbReference type="GO" id="GO:0019752">
    <property type="term" value="P:carboxylic acid metabolic process"/>
    <property type="evidence" value="ECO:0007669"/>
    <property type="project" value="InterPro"/>
</dbReference>
<dbReference type="GO" id="GO:0015937">
    <property type="term" value="P:coenzyme A biosynthetic process"/>
    <property type="evidence" value="ECO:0000318"/>
    <property type="project" value="GO_Central"/>
</dbReference>
<dbReference type="GO" id="GO:2001120">
    <property type="term" value="P:methanofuran biosynthetic process"/>
    <property type="evidence" value="ECO:0007669"/>
    <property type="project" value="UniProtKB-UniRule"/>
</dbReference>
<dbReference type="FunFam" id="3.40.640.10:FF:000125">
    <property type="entry name" value="Probable L-tyrosine/L-aspartate decarboxylase"/>
    <property type="match status" value="1"/>
</dbReference>
<dbReference type="Gene3D" id="3.90.1150.10">
    <property type="entry name" value="Aspartate Aminotransferase, domain 1"/>
    <property type="match status" value="1"/>
</dbReference>
<dbReference type="Gene3D" id="3.40.640.10">
    <property type="entry name" value="Type I PLP-dependent aspartate aminotransferase-like (Major domain)"/>
    <property type="match status" value="1"/>
</dbReference>
<dbReference type="HAMAP" id="MF_01610">
    <property type="entry name" value="MfnA_decarbox"/>
    <property type="match status" value="1"/>
</dbReference>
<dbReference type="InterPro" id="IPR050477">
    <property type="entry name" value="GrpII_AminoAcid_Decarb"/>
</dbReference>
<dbReference type="InterPro" id="IPR020931">
    <property type="entry name" value="MfnA"/>
</dbReference>
<dbReference type="InterPro" id="IPR002129">
    <property type="entry name" value="PyrdxlP-dep_de-COase"/>
</dbReference>
<dbReference type="InterPro" id="IPR015424">
    <property type="entry name" value="PyrdxlP-dep_Trfase"/>
</dbReference>
<dbReference type="InterPro" id="IPR015421">
    <property type="entry name" value="PyrdxlP-dep_Trfase_major"/>
</dbReference>
<dbReference type="InterPro" id="IPR015422">
    <property type="entry name" value="PyrdxlP-dep_Trfase_small"/>
</dbReference>
<dbReference type="NCBIfam" id="TIGR03812">
    <property type="entry name" value="tyr_de_CO2_Arch"/>
    <property type="match status" value="1"/>
</dbReference>
<dbReference type="PANTHER" id="PTHR42735">
    <property type="match status" value="1"/>
</dbReference>
<dbReference type="PANTHER" id="PTHR42735:SF6">
    <property type="entry name" value="SPHINGOSINE-1-PHOSPHATE LYASE 1"/>
    <property type="match status" value="1"/>
</dbReference>
<dbReference type="Pfam" id="PF00282">
    <property type="entry name" value="Pyridoxal_deC"/>
    <property type="match status" value="1"/>
</dbReference>
<dbReference type="SUPFAM" id="SSF53383">
    <property type="entry name" value="PLP-dependent transferases"/>
    <property type="match status" value="1"/>
</dbReference>
<reference key="1">
    <citation type="journal article" date="2002" name="Genome Res.">
        <title>The genome of Methanosarcina acetivorans reveals extensive metabolic and physiological diversity.</title>
        <authorList>
            <person name="Galagan J.E."/>
            <person name="Nusbaum C."/>
            <person name="Roy A."/>
            <person name="Endrizzi M.G."/>
            <person name="Macdonald P."/>
            <person name="FitzHugh W."/>
            <person name="Calvo S."/>
            <person name="Engels R."/>
            <person name="Smirnov S."/>
            <person name="Atnoor D."/>
            <person name="Brown A."/>
            <person name="Allen N."/>
            <person name="Naylor J."/>
            <person name="Stange-Thomann N."/>
            <person name="DeArellano K."/>
            <person name="Johnson R."/>
            <person name="Linton L."/>
            <person name="McEwan P."/>
            <person name="McKernan K."/>
            <person name="Talamas J."/>
            <person name="Tirrell A."/>
            <person name="Ye W."/>
            <person name="Zimmer A."/>
            <person name="Barber R.D."/>
            <person name="Cann I."/>
            <person name="Graham D.E."/>
            <person name="Grahame D.A."/>
            <person name="Guss A.M."/>
            <person name="Hedderich R."/>
            <person name="Ingram-Smith C."/>
            <person name="Kuettner H.C."/>
            <person name="Krzycki J.A."/>
            <person name="Leigh J.A."/>
            <person name="Li W."/>
            <person name="Liu J."/>
            <person name="Mukhopadhyay B."/>
            <person name="Reeve J.N."/>
            <person name="Smith K."/>
            <person name="Springer T.A."/>
            <person name="Umayam L.A."/>
            <person name="White O."/>
            <person name="White R.H."/>
            <person name="de Macario E.C."/>
            <person name="Ferry J.G."/>
            <person name="Jarrell K.F."/>
            <person name="Jing H."/>
            <person name="Macario A.J.L."/>
            <person name="Paulsen I.T."/>
            <person name="Pritchett M."/>
            <person name="Sowers K.R."/>
            <person name="Swanson R.V."/>
            <person name="Zinder S.H."/>
            <person name="Lander E."/>
            <person name="Metcalf W.W."/>
            <person name="Birren B."/>
        </authorList>
    </citation>
    <scope>NUCLEOTIDE SEQUENCE [LARGE SCALE GENOMIC DNA]</scope>
    <source>
        <strain>ATCC 35395 / DSM 2834 / JCM 12185 / C2A</strain>
    </source>
</reference>
<accession>Q8TUQ9</accession>
<keyword id="KW-0210">Decarboxylase</keyword>
<keyword id="KW-0456">Lyase</keyword>
<keyword id="KW-0663">Pyridoxal phosphate</keyword>
<keyword id="KW-1185">Reference proteome</keyword>